<sequence length="77" mass="8711">MARVCQVTGKAPMSGNNVSHANNKTKRRFLPNLQNRRIWVESENRWVRLRVSNAGLRLIDKNGIDAVLADLRARGEA</sequence>
<organism>
    <name type="scientific">Paraburkholderia xenovorans (strain LB400)</name>
    <dbReference type="NCBI Taxonomy" id="266265"/>
    <lineage>
        <taxon>Bacteria</taxon>
        <taxon>Pseudomonadati</taxon>
        <taxon>Pseudomonadota</taxon>
        <taxon>Betaproteobacteria</taxon>
        <taxon>Burkholderiales</taxon>
        <taxon>Burkholderiaceae</taxon>
        <taxon>Paraburkholderia</taxon>
    </lineage>
</organism>
<feature type="chain" id="PRO_1000007196" description="Large ribosomal subunit protein bL28">
    <location>
        <begin position="1"/>
        <end position="77"/>
    </location>
</feature>
<feature type="region of interest" description="Disordered" evidence="2">
    <location>
        <begin position="1"/>
        <end position="25"/>
    </location>
</feature>
<gene>
    <name evidence="1" type="primary">rpmB</name>
    <name type="ordered locus">Bxeno_A3579</name>
    <name type="ORF">Bxe_A0817</name>
</gene>
<name>RL28_PARXL</name>
<dbReference type="EMBL" id="CP000270">
    <property type="protein sequence ID" value="ABE32117.1"/>
    <property type="molecule type" value="Genomic_DNA"/>
</dbReference>
<dbReference type="RefSeq" id="WP_007180631.1">
    <property type="nucleotide sequence ID" value="NZ_CP008760.1"/>
</dbReference>
<dbReference type="SMR" id="Q13UX2"/>
<dbReference type="STRING" id="266265.Bxe_A0817"/>
<dbReference type="GeneID" id="97052507"/>
<dbReference type="KEGG" id="bxb:DR64_2982"/>
<dbReference type="KEGG" id="bxe:Bxe_A0817"/>
<dbReference type="eggNOG" id="COG0227">
    <property type="taxonomic scope" value="Bacteria"/>
</dbReference>
<dbReference type="OrthoDB" id="9805609at2"/>
<dbReference type="Proteomes" id="UP000001817">
    <property type="component" value="Chromosome 1"/>
</dbReference>
<dbReference type="GO" id="GO:0022625">
    <property type="term" value="C:cytosolic large ribosomal subunit"/>
    <property type="evidence" value="ECO:0007669"/>
    <property type="project" value="TreeGrafter"/>
</dbReference>
<dbReference type="GO" id="GO:0003735">
    <property type="term" value="F:structural constituent of ribosome"/>
    <property type="evidence" value="ECO:0007669"/>
    <property type="project" value="InterPro"/>
</dbReference>
<dbReference type="GO" id="GO:0006412">
    <property type="term" value="P:translation"/>
    <property type="evidence" value="ECO:0007669"/>
    <property type="project" value="UniProtKB-UniRule"/>
</dbReference>
<dbReference type="FunFam" id="2.30.170.40:FF:000001">
    <property type="entry name" value="50S ribosomal protein L28"/>
    <property type="match status" value="1"/>
</dbReference>
<dbReference type="Gene3D" id="2.30.170.40">
    <property type="entry name" value="Ribosomal protein L28/L24"/>
    <property type="match status" value="1"/>
</dbReference>
<dbReference type="HAMAP" id="MF_00373">
    <property type="entry name" value="Ribosomal_bL28"/>
    <property type="match status" value="1"/>
</dbReference>
<dbReference type="InterPro" id="IPR026569">
    <property type="entry name" value="Ribosomal_bL28"/>
</dbReference>
<dbReference type="InterPro" id="IPR034704">
    <property type="entry name" value="Ribosomal_bL28/bL31-like_sf"/>
</dbReference>
<dbReference type="InterPro" id="IPR001383">
    <property type="entry name" value="Ribosomal_bL28_bact-type"/>
</dbReference>
<dbReference type="InterPro" id="IPR037147">
    <property type="entry name" value="Ribosomal_bL28_sf"/>
</dbReference>
<dbReference type="NCBIfam" id="TIGR00009">
    <property type="entry name" value="L28"/>
    <property type="match status" value="1"/>
</dbReference>
<dbReference type="PANTHER" id="PTHR13528">
    <property type="entry name" value="39S RIBOSOMAL PROTEIN L28, MITOCHONDRIAL"/>
    <property type="match status" value="1"/>
</dbReference>
<dbReference type="PANTHER" id="PTHR13528:SF2">
    <property type="entry name" value="LARGE RIBOSOMAL SUBUNIT PROTEIN BL28M"/>
    <property type="match status" value="1"/>
</dbReference>
<dbReference type="Pfam" id="PF00830">
    <property type="entry name" value="Ribosomal_L28"/>
    <property type="match status" value="1"/>
</dbReference>
<dbReference type="SUPFAM" id="SSF143800">
    <property type="entry name" value="L28p-like"/>
    <property type="match status" value="1"/>
</dbReference>
<protein>
    <recommendedName>
        <fullName evidence="1">Large ribosomal subunit protein bL28</fullName>
    </recommendedName>
    <alternativeName>
        <fullName evidence="3">50S ribosomal protein L28</fullName>
    </alternativeName>
</protein>
<reference key="1">
    <citation type="journal article" date="2006" name="Proc. Natl. Acad. Sci. U.S.A.">
        <title>Burkholderia xenovorans LB400 harbors a multi-replicon, 9.73-Mbp genome shaped for versatility.</title>
        <authorList>
            <person name="Chain P.S.G."/>
            <person name="Denef V.J."/>
            <person name="Konstantinidis K.T."/>
            <person name="Vergez L.M."/>
            <person name="Agullo L."/>
            <person name="Reyes V.L."/>
            <person name="Hauser L."/>
            <person name="Cordova M."/>
            <person name="Gomez L."/>
            <person name="Gonzalez M."/>
            <person name="Land M."/>
            <person name="Lao V."/>
            <person name="Larimer F."/>
            <person name="LiPuma J.J."/>
            <person name="Mahenthiralingam E."/>
            <person name="Malfatti S.A."/>
            <person name="Marx C.J."/>
            <person name="Parnell J.J."/>
            <person name="Ramette A."/>
            <person name="Richardson P."/>
            <person name="Seeger M."/>
            <person name="Smith D."/>
            <person name="Spilker T."/>
            <person name="Sul W.J."/>
            <person name="Tsoi T.V."/>
            <person name="Ulrich L.E."/>
            <person name="Zhulin I.B."/>
            <person name="Tiedje J.M."/>
        </authorList>
    </citation>
    <scope>NUCLEOTIDE SEQUENCE [LARGE SCALE GENOMIC DNA]</scope>
    <source>
        <strain>LB400</strain>
    </source>
</reference>
<accession>Q13UX2</accession>
<evidence type="ECO:0000255" key="1">
    <source>
        <dbReference type="HAMAP-Rule" id="MF_00373"/>
    </source>
</evidence>
<evidence type="ECO:0000256" key="2">
    <source>
        <dbReference type="SAM" id="MobiDB-lite"/>
    </source>
</evidence>
<evidence type="ECO:0000305" key="3"/>
<keyword id="KW-1185">Reference proteome</keyword>
<keyword id="KW-0687">Ribonucleoprotein</keyword>
<keyword id="KW-0689">Ribosomal protein</keyword>
<proteinExistence type="inferred from homology"/>
<comment type="similarity">
    <text evidence="1">Belongs to the bacterial ribosomal protein bL28 family.</text>
</comment>